<keyword id="KW-0067">ATP-binding</keyword>
<keyword id="KW-0119">Carbohydrate metabolism</keyword>
<keyword id="KW-0418">Kinase</keyword>
<keyword id="KW-0511">Multifunctional enzyme</keyword>
<keyword id="KW-0547">Nucleotide-binding</keyword>
<keyword id="KW-0548">Nucleotidyltransferase</keyword>
<keyword id="KW-0808">Transferase</keyword>
<comment type="function">
    <text evidence="1">Catalyzes the phosphorylation of D-glycero-D-manno-heptose 7-phosphate at the C-1 position to selectively form D-glycero-beta-D-manno-heptose-1,7-bisphosphate.</text>
</comment>
<comment type="function">
    <text evidence="1">Catalyzes the ADP transfer from ATP to D-glycero-beta-D-manno-heptose 1-phosphate, yielding ADP-D-glycero-beta-D-manno-heptose.</text>
</comment>
<comment type="catalytic activity">
    <reaction evidence="1">
        <text>D-glycero-beta-D-manno-heptose 7-phosphate + ATP = D-glycero-beta-D-manno-heptose 1,7-bisphosphate + ADP + H(+)</text>
        <dbReference type="Rhea" id="RHEA:27473"/>
        <dbReference type="ChEBI" id="CHEBI:15378"/>
        <dbReference type="ChEBI" id="CHEBI:30616"/>
        <dbReference type="ChEBI" id="CHEBI:60204"/>
        <dbReference type="ChEBI" id="CHEBI:60208"/>
        <dbReference type="ChEBI" id="CHEBI:456216"/>
        <dbReference type="EC" id="2.7.1.167"/>
    </reaction>
</comment>
<comment type="catalytic activity">
    <reaction evidence="1">
        <text>D-glycero-beta-D-manno-heptose 1-phosphate + ATP + H(+) = ADP-D-glycero-beta-D-manno-heptose + diphosphate</text>
        <dbReference type="Rhea" id="RHEA:27465"/>
        <dbReference type="ChEBI" id="CHEBI:15378"/>
        <dbReference type="ChEBI" id="CHEBI:30616"/>
        <dbReference type="ChEBI" id="CHEBI:33019"/>
        <dbReference type="ChEBI" id="CHEBI:59967"/>
        <dbReference type="ChEBI" id="CHEBI:61593"/>
        <dbReference type="EC" id="2.7.7.70"/>
    </reaction>
</comment>
<comment type="pathway">
    <text evidence="1">Nucleotide-sugar biosynthesis; ADP-L-glycero-beta-D-manno-heptose biosynthesis; ADP-L-glycero-beta-D-manno-heptose from D-glycero-beta-D-manno-heptose 7-phosphate: step 1/4.</text>
</comment>
<comment type="pathway">
    <text evidence="1">Nucleotide-sugar biosynthesis; ADP-L-glycero-beta-D-manno-heptose biosynthesis; ADP-L-glycero-beta-D-manno-heptose from D-glycero-beta-D-manno-heptose 7-phosphate: step 3/4.</text>
</comment>
<comment type="subunit">
    <text evidence="1">Homodimer.</text>
</comment>
<comment type="similarity">
    <text evidence="1">In the N-terminal section; belongs to the carbohydrate kinase PfkB family.</text>
</comment>
<comment type="similarity">
    <text evidence="1">In the C-terminal section; belongs to the cytidylyltransferase family.</text>
</comment>
<gene>
    <name evidence="1" type="primary">hldE</name>
    <name type="ordered locus">KPK_0665</name>
</gene>
<proteinExistence type="inferred from homology"/>
<evidence type="ECO:0000255" key="1">
    <source>
        <dbReference type="HAMAP-Rule" id="MF_01603"/>
    </source>
</evidence>
<organism>
    <name type="scientific">Klebsiella pneumoniae (strain 342)</name>
    <dbReference type="NCBI Taxonomy" id="507522"/>
    <lineage>
        <taxon>Bacteria</taxon>
        <taxon>Pseudomonadati</taxon>
        <taxon>Pseudomonadota</taxon>
        <taxon>Gammaproteobacteria</taxon>
        <taxon>Enterobacterales</taxon>
        <taxon>Enterobacteriaceae</taxon>
        <taxon>Klebsiella/Raoultella group</taxon>
        <taxon>Klebsiella</taxon>
        <taxon>Klebsiella pneumoniae complex</taxon>
    </lineage>
</organism>
<feature type="chain" id="PRO_1000185812" description="Bifunctional protein HldE">
    <location>
        <begin position="1"/>
        <end position="477"/>
    </location>
</feature>
<feature type="region of interest" description="Ribokinase">
    <location>
        <begin position="1"/>
        <end position="318"/>
    </location>
</feature>
<feature type="region of interest" description="Cytidylyltransferase">
    <location>
        <begin position="344"/>
        <end position="477"/>
    </location>
</feature>
<feature type="active site" evidence="1">
    <location>
        <position position="264"/>
    </location>
</feature>
<feature type="binding site" evidence="1">
    <location>
        <begin position="195"/>
        <end position="198"/>
    </location>
    <ligand>
        <name>ATP</name>
        <dbReference type="ChEBI" id="CHEBI:30616"/>
    </ligand>
</feature>
<sequence>MKVTLPEFERAGVLVVGDVMLDRYWYGPTSRISPEAPVPVVKVENIEERPGGAANVAMNIASLGATSRLVGLTGIDDAARALSQALANVNVKCDFVSVPTHPTITKLRVLSRNQQLIRLDFEEGFSGVDPQPMHERIQQALGSIGALVLSDYAKGALTSVQTMIKLAREAGVPVLIDPKGTDFERYRGATLLTPNLSEFEAVVGKCQDEAEIVERGMKLIAEFELSALLVTRSEQGMTLLQPGRPPLHMPTQAQEVYDVTGAGDTVIGVLAATLASGNTLEEACYFANAAAGVVVGKLGTSTVSPVELENAVRGRAETGFGVMSEEELKQAVAAARKRGEKVVMTNGVFDILHAGHVSYLANARKLGDRLIVAVNSDASTKRLKGETRPVNPLEQRMIVLGALEAVDWVVSFEEDTPQRLIAGILPDLLVKGGDYKPEQIAGSEEVWANGGEVLVLNFEDGCSTTNIIKKIQKDSDK</sequence>
<accession>B5XU40</accession>
<name>HLDE_KLEP3</name>
<dbReference type="EC" id="2.7.1.167" evidence="1"/>
<dbReference type="EC" id="2.7.7.70" evidence="1"/>
<dbReference type="EMBL" id="CP000964">
    <property type="protein sequence ID" value="ACI07854.1"/>
    <property type="molecule type" value="Genomic_DNA"/>
</dbReference>
<dbReference type="SMR" id="B5XU40"/>
<dbReference type="KEGG" id="kpe:KPK_0665"/>
<dbReference type="HOGENOM" id="CLU_021150_2_1_6"/>
<dbReference type="UniPathway" id="UPA00356">
    <property type="reaction ID" value="UER00437"/>
</dbReference>
<dbReference type="UniPathway" id="UPA00356">
    <property type="reaction ID" value="UER00439"/>
</dbReference>
<dbReference type="Proteomes" id="UP000001734">
    <property type="component" value="Chromosome"/>
</dbReference>
<dbReference type="GO" id="GO:0005829">
    <property type="term" value="C:cytosol"/>
    <property type="evidence" value="ECO:0007669"/>
    <property type="project" value="TreeGrafter"/>
</dbReference>
<dbReference type="GO" id="GO:0005524">
    <property type="term" value="F:ATP binding"/>
    <property type="evidence" value="ECO:0007669"/>
    <property type="project" value="UniProtKB-UniRule"/>
</dbReference>
<dbReference type="GO" id="GO:0033785">
    <property type="term" value="F:heptose 7-phosphate kinase activity"/>
    <property type="evidence" value="ECO:0007669"/>
    <property type="project" value="UniProtKB-UniRule"/>
</dbReference>
<dbReference type="GO" id="GO:0033786">
    <property type="term" value="F:heptose-1-phosphate adenylyltransferase activity"/>
    <property type="evidence" value="ECO:0007669"/>
    <property type="project" value="UniProtKB-UniRule"/>
</dbReference>
<dbReference type="GO" id="GO:0016773">
    <property type="term" value="F:phosphotransferase activity, alcohol group as acceptor"/>
    <property type="evidence" value="ECO:0007669"/>
    <property type="project" value="InterPro"/>
</dbReference>
<dbReference type="GO" id="GO:0097171">
    <property type="term" value="P:ADP-L-glycero-beta-D-manno-heptose biosynthetic process"/>
    <property type="evidence" value="ECO:0007669"/>
    <property type="project" value="UniProtKB-UniPathway"/>
</dbReference>
<dbReference type="CDD" id="cd01172">
    <property type="entry name" value="RfaE_like"/>
    <property type="match status" value="1"/>
</dbReference>
<dbReference type="FunFam" id="3.40.1190.20:FF:000002">
    <property type="entry name" value="Bifunctional protein HldE"/>
    <property type="match status" value="1"/>
</dbReference>
<dbReference type="FunFam" id="3.40.50.620:FF:000028">
    <property type="entry name" value="Bifunctional protein HldE"/>
    <property type="match status" value="1"/>
</dbReference>
<dbReference type="Gene3D" id="3.40.1190.20">
    <property type="match status" value="1"/>
</dbReference>
<dbReference type="Gene3D" id="3.40.50.620">
    <property type="entry name" value="HUPs"/>
    <property type="match status" value="1"/>
</dbReference>
<dbReference type="HAMAP" id="MF_01603">
    <property type="entry name" value="HldE"/>
    <property type="match status" value="1"/>
</dbReference>
<dbReference type="InterPro" id="IPR023030">
    <property type="entry name" value="Bifunc_HldE"/>
</dbReference>
<dbReference type="InterPro" id="IPR002173">
    <property type="entry name" value="Carboh/pur_kinase_PfkB_CS"/>
</dbReference>
<dbReference type="InterPro" id="IPR004821">
    <property type="entry name" value="Cyt_trans-like"/>
</dbReference>
<dbReference type="InterPro" id="IPR011611">
    <property type="entry name" value="PfkB_dom"/>
</dbReference>
<dbReference type="InterPro" id="IPR011913">
    <property type="entry name" value="RfaE_dom_I"/>
</dbReference>
<dbReference type="InterPro" id="IPR011914">
    <property type="entry name" value="RfaE_dom_II"/>
</dbReference>
<dbReference type="InterPro" id="IPR029056">
    <property type="entry name" value="Ribokinase-like"/>
</dbReference>
<dbReference type="InterPro" id="IPR014729">
    <property type="entry name" value="Rossmann-like_a/b/a_fold"/>
</dbReference>
<dbReference type="NCBIfam" id="TIGR00125">
    <property type="entry name" value="cyt_tran_rel"/>
    <property type="match status" value="1"/>
</dbReference>
<dbReference type="NCBIfam" id="NF008454">
    <property type="entry name" value="PRK11316.1"/>
    <property type="match status" value="1"/>
</dbReference>
<dbReference type="NCBIfam" id="TIGR02198">
    <property type="entry name" value="rfaE_dom_I"/>
    <property type="match status" value="1"/>
</dbReference>
<dbReference type="NCBIfam" id="TIGR02199">
    <property type="entry name" value="rfaE_dom_II"/>
    <property type="match status" value="1"/>
</dbReference>
<dbReference type="PANTHER" id="PTHR46969">
    <property type="entry name" value="BIFUNCTIONAL PROTEIN HLDE"/>
    <property type="match status" value="1"/>
</dbReference>
<dbReference type="PANTHER" id="PTHR46969:SF1">
    <property type="entry name" value="BIFUNCTIONAL PROTEIN HLDE"/>
    <property type="match status" value="1"/>
</dbReference>
<dbReference type="Pfam" id="PF01467">
    <property type="entry name" value="CTP_transf_like"/>
    <property type="match status" value="1"/>
</dbReference>
<dbReference type="Pfam" id="PF00294">
    <property type="entry name" value="PfkB"/>
    <property type="match status" value="1"/>
</dbReference>
<dbReference type="SUPFAM" id="SSF52374">
    <property type="entry name" value="Nucleotidylyl transferase"/>
    <property type="match status" value="1"/>
</dbReference>
<dbReference type="SUPFAM" id="SSF53613">
    <property type="entry name" value="Ribokinase-like"/>
    <property type="match status" value="1"/>
</dbReference>
<dbReference type="PROSITE" id="PS00583">
    <property type="entry name" value="PFKB_KINASES_1"/>
    <property type="match status" value="1"/>
</dbReference>
<reference key="1">
    <citation type="journal article" date="2008" name="PLoS Genet.">
        <title>Complete genome sequence of the N2-fixing broad host range endophyte Klebsiella pneumoniae 342 and virulence predictions verified in mice.</title>
        <authorList>
            <person name="Fouts D.E."/>
            <person name="Tyler H.L."/>
            <person name="DeBoy R.T."/>
            <person name="Daugherty S."/>
            <person name="Ren Q."/>
            <person name="Badger J.H."/>
            <person name="Durkin A.S."/>
            <person name="Huot H."/>
            <person name="Shrivastava S."/>
            <person name="Kothari S."/>
            <person name="Dodson R.J."/>
            <person name="Mohamoud Y."/>
            <person name="Khouri H."/>
            <person name="Roesch L.F.W."/>
            <person name="Krogfelt K.A."/>
            <person name="Struve C."/>
            <person name="Triplett E.W."/>
            <person name="Methe B.A."/>
        </authorList>
    </citation>
    <scope>NUCLEOTIDE SEQUENCE [LARGE SCALE GENOMIC DNA]</scope>
    <source>
        <strain>342</strain>
    </source>
</reference>
<protein>
    <recommendedName>
        <fullName evidence="1">Bifunctional protein HldE</fullName>
    </recommendedName>
    <domain>
        <recommendedName>
            <fullName evidence="1">D-beta-D-heptose 7-phosphate kinase</fullName>
            <ecNumber evidence="1">2.7.1.167</ecNumber>
        </recommendedName>
        <alternativeName>
            <fullName evidence="1">D-beta-D-heptose 7-phosphotransferase</fullName>
        </alternativeName>
        <alternativeName>
            <fullName evidence="1">D-glycero-beta-D-manno-heptose-7-phosphate kinase</fullName>
        </alternativeName>
    </domain>
    <domain>
        <recommendedName>
            <fullName evidence="1">D-beta-D-heptose 1-phosphate adenylyltransferase</fullName>
            <ecNumber evidence="1">2.7.7.70</ecNumber>
        </recommendedName>
        <alternativeName>
            <fullName evidence="1">D-glycero-beta-D-manno-heptose 1-phosphate adenylyltransferase</fullName>
        </alternativeName>
    </domain>
</protein>